<sequence length="177" mass="18904">MSRVAKAPVVVPAGVDVKINGQVITIKGKNGELTRTLNDAVEVKHADNTLTFGPRDGYADGWAQAGTARALLNSMVIGVTEGFTKKLQLVGVGYRAAVKGNVINLSLGFSHPVDHQLPAGITAECPTQTEIVLKGADKQVIGQVAADLRAYRRPEPYKGKGVRYADEVVRTKEAKKK</sequence>
<organism>
    <name type="scientific">Escherichia coli (strain SE11)</name>
    <dbReference type="NCBI Taxonomy" id="409438"/>
    <lineage>
        <taxon>Bacteria</taxon>
        <taxon>Pseudomonadati</taxon>
        <taxon>Pseudomonadota</taxon>
        <taxon>Gammaproteobacteria</taxon>
        <taxon>Enterobacterales</taxon>
        <taxon>Enterobacteriaceae</taxon>
        <taxon>Escherichia</taxon>
    </lineage>
</organism>
<feature type="chain" id="PRO_1000143987" description="Large ribosomal subunit protein uL6">
    <location>
        <begin position="1"/>
        <end position="177"/>
    </location>
</feature>
<feature type="modified residue" description="N6-acetyllysine" evidence="1">
    <location>
        <position position="44"/>
    </location>
</feature>
<accession>B6I219</accession>
<proteinExistence type="inferred from homology"/>
<name>RL6_ECOSE</name>
<reference key="1">
    <citation type="journal article" date="2008" name="DNA Res.">
        <title>Complete genome sequence and comparative analysis of the wild-type commensal Escherichia coli strain SE11 isolated from a healthy adult.</title>
        <authorList>
            <person name="Oshima K."/>
            <person name="Toh H."/>
            <person name="Ogura Y."/>
            <person name="Sasamoto H."/>
            <person name="Morita H."/>
            <person name="Park S.-H."/>
            <person name="Ooka T."/>
            <person name="Iyoda S."/>
            <person name="Taylor T.D."/>
            <person name="Hayashi T."/>
            <person name="Itoh K."/>
            <person name="Hattori M."/>
        </authorList>
    </citation>
    <scope>NUCLEOTIDE SEQUENCE [LARGE SCALE GENOMIC DNA]</scope>
    <source>
        <strain>SE11</strain>
    </source>
</reference>
<keyword id="KW-0007">Acetylation</keyword>
<keyword id="KW-0687">Ribonucleoprotein</keyword>
<keyword id="KW-0689">Ribosomal protein</keyword>
<keyword id="KW-0694">RNA-binding</keyword>
<keyword id="KW-0699">rRNA-binding</keyword>
<protein>
    <recommendedName>
        <fullName evidence="1">Large ribosomal subunit protein uL6</fullName>
    </recommendedName>
    <alternativeName>
        <fullName evidence="2">50S ribosomal protein L6</fullName>
    </alternativeName>
</protein>
<gene>
    <name evidence="1" type="primary">rplF</name>
    <name type="ordered locus">ECSE_3580</name>
</gene>
<dbReference type="EMBL" id="AP009240">
    <property type="protein sequence ID" value="BAG79104.1"/>
    <property type="molecule type" value="Genomic_DNA"/>
</dbReference>
<dbReference type="RefSeq" id="WP_000091945.1">
    <property type="nucleotide sequence ID" value="NC_011415.1"/>
</dbReference>
<dbReference type="SMR" id="B6I219"/>
<dbReference type="GeneID" id="86948169"/>
<dbReference type="KEGG" id="ecy:ECSE_3580"/>
<dbReference type="HOGENOM" id="CLU_065464_1_2_6"/>
<dbReference type="Proteomes" id="UP000008199">
    <property type="component" value="Chromosome"/>
</dbReference>
<dbReference type="GO" id="GO:0022625">
    <property type="term" value="C:cytosolic large ribosomal subunit"/>
    <property type="evidence" value="ECO:0007669"/>
    <property type="project" value="TreeGrafter"/>
</dbReference>
<dbReference type="GO" id="GO:0019843">
    <property type="term" value="F:rRNA binding"/>
    <property type="evidence" value="ECO:0007669"/>
    <property type="project" value="UniProtKB-UniRule"/>
</dbReference>
<dbReference type="GO" id="GO:0003735">
    <property type="term" value="F:structural constituent of ribosome"/>
    <property type="evidence" value="ECO:0007669"/>
    <property type="project" value="InterPro"/>
</dbReference>
<dbReference type="GO" id="GO:0002181">
    <property type="term" value="P:cytoplasmic translation"/>
    <property type="evidence" value="ECO:0007669"/>
    <property type="project" value="TreeGrafter"/>
</dbReference>
<dbReference type="FunFam" id="3.90.930.12:FF:000001">
    <property type="entry name" value="50S ribosomal protein L6"/>
    <property type="match status" value="1"/>
</dbReference>
<dbReference type="FunFam" id="3.90.930.12:FF:000002">
    <property type="entry name" value="50S ribosomal protein L6"/>
    <property type="match status" value="1"/>
</dbReference>
<dbReference type="Gene3D" id="3.90.930.12">
    <property type="entry name" value="Ribosomal protein L6, alpha-beta domain"/>
    <property type="match status" value="2"/>
</dbReference>
<dbReference type="HAMAP" id="MF_01365_B">
    <property type="entry name" value="Ribosomal_uL6_B"/>
    <property type="match status" value="1"/>
</dbReference>
<dbReference type="InterPro" id="IPR000702">
    <property type="entry name" value="Ribosomal_uL6-like"/>
</dbReference>
<dbReference type="InterPro" id="IPR036789">
    <property type="entry name" value="Ribosomal_uL6-like_a/b-dom_sf"/>
</dbReference>
<dbReference type="InterPro" id="IPR020040">
    <property type="entry name" value="Ribosomal_uL6_a/b-dom"/>
</dbReference>
<dbReference type="InterPro" id="IPR019906">
    <property type="entry name" value="Ribosomal_uL6_bac-type"/>
</dbReference>
<dbReference type="InterPro" id="IPR002358">
    <property type="entry name" value="Ribosomal_uL6_CS"/>
</dbReference>
<dbReference type="NCBIfam" id="TIGR03654">
    <property type="entry name" value="L6_bact"/>
    <property type="match status" value="1"/>
</dbReference>
<dbReference type="PANTHER" id="PTHR11655">
    <property type="entry name" value="60S/50S RIBOSOMAL PROTEIN L6/L9"/>
    <property type="match status" value="1"/>
</dbReference>
<dbReference type="PANTHER" id="PTHR11655:SF14">
    <property type="entry name" value="LARGE RIBOSOMAL SUBUNIT PROTEIN UL6M"/>
    <property type="match status" value="1"/>
</dbReference>
<dbReference type="Pfam" id="PF00347">
    <property type="entry name" value="Ribosomal_L6"/>
    <property type="match status" value="2"/>
</dbReference>
<dbReference type="PIRSF" id="PIRSF002162">
    <property type="entry name" value="Ribosomal_L6"/>
    <property type="match status" value="1"/>
</dbReference>
<dbReference type="PRINTS" id="PR00059">
    <property type="entry name" value="RIBOSOMALL6"/>
</dbReference>
<dbReference type="SUPFAM" id="SSF56053">
    <property type="entry name" value="Ribosomal protein L6"/>
    <property type="match status" value="2"/>
</dbReference>
<dbReference type="PROSITE" id="PS00525">
    <property type="entry name" value="RIBOSOMAL_L6_1"/>
    <property type="match status" value="1"/>
</dbReference>
<evidence type="ECO:0000255" key="1">
    <source>
        <dbReference type="HAMAP-Rule" id="MF_01365"/>
    </source>
</evidence>
<evidence type="ECO:0000305" key="2"/>
<comment type="function">
    <text evidence="1">This protein binds to the 23S rRNA, and is important in its secondary structure. It is located near the subunit interface in the base of the L7/L12 stalk, and near the tRNA binding site of the peptidyltransferase center.</text>
</comment>
<comment type="subunit">
    <text evidence="1">Part of the 50S ribosomal subunit.</text>
</comment>
<comment type="similarity">
    <text evidence="1">Belongs to the universal ribosomal protein uL6 family.</text>
</comment>